<keyword id="KW-0067">ATP-binding</keyword>
<keyword id="KW-0963">Cytoplasm</keyword>
<keyword id="KW-0436">Ligase</keyword>
<keyword id="KW-0547">Nucleotide-binding</keyword>
<keyword id="KW-0658">Purine biosynthesis</keyword>
<dbReference type="EC" id="6.3.3.1" evidence="1"/>
<dbReference type="EMBL" id="CP001107">
    <property type="protein sequence ID" value="ACR74887.1"/>
    <property type="molecule type" value="Genomic_DNA"/>
</dbReference>
<dbReference type="RefSeq" id="WP_012741988.1">
    <property type="nucleotide sequence ID" value="NZ_CAXSYD010000005.1"/>
</dbReference>
<dbReference type="SMR" id="C4ZH75"/>
<dbReference type="STRING" id="515619.EUBREC_1125"/>
<dbReference type="PaxDb" id="515619-EUBREC_1125"/>
<dbReference type="GeneID" id="86987976"/>
<dbReference type="KEGG" id="ere:EUBREC_1125"/>
<dbReference type="HOGENOM" id="CLU_047116_0_0_9"/>
<dbReference type="UniPathway" id="UPA00074">
    <property type="reaction ID" value="UER00129"/>
</dbReference>
<dbReference type="Proteomes" id="UP000001477">
    <property type="component" value="Chromosome"/>
</dbReference>
<dbReference type="GO" id="GO:0005829">
    <property type="term" value="C:cytosol"/>
    <property type="evidence" value="ECO:0007669"/>
    <property type="project" value="TreeGrafter"/>
</dbReference>
<dbReference type="GO" id="GO:0005524">
    <property type="term" value="F:ATP binding"/>
    <property type="evidence" value="ECO:0007669"/>
    <property type="project" value="UniProtKB-KW"/>
</dbReference>
<dbReference type="GO" id="GO:0004637">
    <property type="term" value="F:phosphoribosylamine-glycine ligase activity"/>
    <property type="evidence" value="ECO:0007669"/>
    <property type="project" value="TreeGrafter"/>
</dbReference>
<dbReference type="GO" id="GO:0004641">
    <property type="term" value="F:phosphoribosylformylglycinamidine cyclo-ligase activity"/>
    <property type="evidence" value="ECO:0007669"/>
    <property type="project" value="UniProtKB-UniRule"/>
</dbReference>
<dbReference type="GO" id="GO:0006189">
    <property type="term" value="P:'de novo' IMP biosynthetic process"/>
    <property type="evidence" value="ECO:0007669"/>
    <property type="project" value="UniProtKB-UniRule"/>
</dbReference>
<dbReference type="GO" id="GO:0046084">
    <property type="term" value="P:adenine biosynthetic process"/>
    <property type="evidence" value="ECO:0007669"/>
    <property type="project" value="TreeGrafter"/>
</dbReference>
<dbReference type="CDD" id="cd02196">
    <property type="entry name" value="PurM"/>
    <property type="match status" value="1"/>
</dbReference>
<dbReference type="FunFam" id="3.30.1330.10:FF:000001">
    <property type="entry name" value="Phosphoribosylformylglycinamidine cyclo-ligase"/>
    <property type="match status" value="1"/>
</dbReference>
<dbReference type="FunFam" id="3.90.650.10:FF:000011">
    <property type="entry name" value="Phosphoribosylformylglycinamidine cyclo-ligase"/>
    <property type="match status" value="1"/>
</dbReference>
<dbReference type="Gene3D" id="3.90.650.10">
    <property type="entry name" value="PurM-like C-terminal domain"/>
    <property type="match status" value="1"/>
</dbReference>
<dbReference type="Gene3D" id="3.30.1330.10">
    <property type="entry name" value="PurM-like, N-terminal domain"/>
    <property type="match status" value="1"/>
</dbReference>
<dbReference type="HAMAP" id="MF_00741">
    <property type="entry name" value="AIRS"/>
    <property type="match status" value="1"/>
</dbReference>
<dbReference type="InterPro" id="IPR010918">
    <property type="entry name" value="PurM-like_C_dom"/>
</dbReference>
<dbReference type="InterPro" id="IPR036676">
    <property type="entry name" value="PurM-like_C_sf"/>
</dbReference>
<dbReference type="InterPro" id="IPR016188">
    <property type="entry name" value="PurM-like_N"/>
</dbReference>
<dbReference type="InterPro" id="IPR036921">
    <property type="entry name" value="PurM-like_N_sf"/>
</dbReference>
<dbReference type="InterPro" id="IPR004733">
    <property type="entry name" value="PurM_cligase"/>
</dbReference>
<dbReference type="NCBIfam" id="TIGR00878">
    <property type="entry name" value="purM"/>
    <property type="match status" value="1"/>
</dbReference>
<dbReference type="PANTHER" id="PTHR10520:SF12">
    <property type="entry name" value="TRIFUNCTIONAL PURINE BIOSYNTHETIC PROTEIN ADENOSINE-3"/>
    <property type="match status" value="1"/>
</dbReference>
<dbReference type="PANTHER" id="PTHR10520">
    <property type="entry name" value="TRIFUNCTIONAL PURINE BIOSYNTHETIC PROTEIN ADENOSINE-3-RELATED"/>
    <property type="match status" value="1"/>
</dbReference>
<dbReference type="Pfam" id="PF00586">
    <property type="entry name" value="AIRS"/>
    <property type="match status" value="1"/>
</dbReference>
<dbReference type="Pfam" id="PF02769">
    <property type="entry name" value="AIRS_C"/>
    <property type="match status" value="1"/>
</dbReference>
<dbReference type="SUPFAM" id="SSF56042">
    <property type="entry name" value="PurM C-terminal domain-like"/>
    <property type="match status" value="1"/>
</dbReference>
<dbReference type="SUPFAM" id="SSF55326">
    <property type="entry name" value="PurM N-terminal domain-like"/>
    <property type="match status" value="1"/>
</dbReference>
<protein>
    <recommendedName>
        <fullName evidence="1">Phosphoribosylformylglycinamidine cyclo-ligase</fullName>
        <ecNumber evidence="1">6.3.3.1</ecNumber>
    </recommendedName>
    <alternativeName>
        <fullName evidence="1">AIR synthase</fullName>
    </alternativeName>
    <alternativeName>
        <fullName evidence="1">AIRS</fullName>
    </alternativeName>
    <alternativeName>
        <fullName evidence="1">Phosphoribosyl-aminoimidazole synthetase</fullName>
    </alternativeName>
</protein>
<reference key="1">
    <citation type="journal article" date="2009" name="Proc. Natl. Acad. Sci. U.S.A.">
        <title>Characterizing a model human gut microbiota composed of members of its two dominant bacterial phyla.</title>
        <authorList>
            <person name="Mahowald M.A."/>
            <person name="Rey F.E."/>
            <person name="Seedorf H."/>
            <person name="Turnbaugh P.J."/>
            <person name="Fulton R.S."/>
            <person name="Wollam A."/>
            <person name="Shah N."/>
            <person name="Wang C."/>
            <person name="Magrini V."/>
            <person name="Wilson R.K."/>
            <person name="Cantarel B.L."/>
            <person name="Coutinho P.M."/>
            <person name="Henrissat B."/>
            <person name="Crock L.W."/>
            <person name="Russell A."/>
            <person name="Verberkmoes N.C."/>
            <person name="Hettich R.L."/>
            <person name="Gordon J.I."/>
        </authorList>
    </citation>
    <scope>NUCLEOTIDE SEQUENCE [LARGE SCALE GENOMIC DNA]</scope>
    <source>
        <strain>ATCC 33656 / DSM 3377 / JCM 17463 / KCTC 5835 / LMG 30912 / VPI 0990</strain>
    </source>
</reference>
<name>PUR5_AGARV</name>
<gene>
    <name evidence="1" type="primary">purM</name>
    <name type="ordered locus">EUBREC_1125</name>
</gene>
<evidence type="ECO:0000255" key="1">
    <source>
        <dbReference type="HAMAP-Rule" id="MF_00741"/>
    </source>
</evidence>
<accession>C4ZH75</accession>
<feature type="chain" id="PRO_1000212821" description="Phosphoribosylformylglycinamidine cyclo-ligase">
    <location>
        <begin position="1"/>
        <end position="341"/>
    </location>
</feature>
<organism>
    <name type="scientific">Agathobacter rectalis (strain ATCC 33656 / DSM 3377 / JCM 17463 / KCTC 5835 / VPI 0990)</name>
    <name type="common">Eubacterium rectale</name>
    <dbReference type="NCBI Taxonomy" id="515619"/>
    <lineage>
        <taxon>Bacteria</taxon>
        <taxon>Bacillati</taxon>
        <taxon>Bacillota</taxon>
        <taxon>Clostridia</taxon>
        <taxon>Lachnospirales</taxon>
        <taxon>Lachnospiraceae</taxon>
        <taxon>Agathobacter</taxon>
    </lineage>
</organism>
<sequence length="341" mass="36348">MDYKNSGVDIEAGYKSVELMKKHVKETMRPEVLGGLGGFSGAFSLASIKDMEDPVLLSGTDGCGTKVKLAFIMDKHDTIGIDAVAMCVNDVACAGGEPLFFLDYIACGKNYPEKIATIVSGVAEGCKQSGCALVGGETAEHPGLMPEDEYDLAGFAVGVVDRKDIITGEGLKDGDVLIGMASTGVHSNGFSLVRKIFKMDKETLNTYHEELGTTLGEALLAPTRIYVKALKAVKDAGVTVKACSHITGGGFYENIPRMLIDGKRAVVEKNSYPVPPIFKMMAREGNVEEQMMYNTYNMGLGMIVAVDPADVDKTMEAMKSAGDTPYVVGKIIDGEKGVDLV</sequence>
<comment type="catalytic activity">
    <reaction evidence="1">
        <text>2-formamido-N(1)-(5-O-phospho-beta-D-ribosyl)acetamidine + ATP = 5-amino-1-(5-phospho-beta-D-ribosyl)imidazole + ADP + phosphate + H(+)</text>
        <dbReference type="Rhea" id="RHEA:23032"/>
        <dbReference type="ChEBI" id="CHEBI:15378"/>
        <dbReference type="ChEBI" id="CHEBI:30616"/>
        <dbReference type="ChEBI" id="CHEBI:43474"/>
        <dbReference type="ChEBI" id="CHEBI:137981"/>
        <dbReference type="ChEBI" id="CHEBI:147287"/>
        <dbReference type="ChEBI" id="CHEBI:456216"/>
        <dbReference type="EC" id="6.3.3.1"/>
    </reaction>
</comment>
<comment type="pathway">
    <text evidence="1">Purine metabolism; IMP biosynthesis via de novo pathway; 5-amino-1-(5-phospho-D-ribosyl)imidazole from N(2)-formyl-N(1)-(5-phospho-D-ribosyl)glycinamide: step 2/2.</text>
</comment>
<comment type="subcellular location">
    <subcellularLocation>
        <location evidence="1">Cytoplasm</location>
    </subcellularLocation>
</comment>
<comment type="similarity">
    <text evidence="1">Belongs to the AIR synthase family.</text>
</comment>
<proteinExistence type="inferred from homology"/>